<keyword id="KW-0067">ATP-binding</keyword>
<keyword id="KW-0143">Chaperone</keyword>
<keyword id="KW-0547">Nucleotide-binding</keyword>
<keyword id="KW-0597">Phosphoprotein</keyword>
<keyword id="KW-0346">Stress response</keyword>
<feature type="chain" id="PRO_1000079217" description="Chaperone protein DnaK">
    <location>
        <begin position="1"/>
        <end position="631"/>
    </location>
</feature>
<feature type="modified residue" description="Phosphothreonine; by autocatalysis" evidence="1">
    <location>
        <position position="198"/>
    </location>
</feature>
<protein>
    <recommendedName>
        <fullName evidence="1">Chaperone protein DnaK</fullName>
    </recommendedName>
    <alternativeName>
        <fullName evidence="1">HSP70</fullName>
    </alternativeName>
    <alternativeName>
        <fullName evidence="1">Heat shock 70 kDa protein</fullName>
    </alternativeName>
    <alternativeName>
        <fullName evidence="1">Heat shock protein 70</fullName>
    </alternativeName>
</protein>
<dbReference type="EMBL" id="CP000927">
    <property type="protein sequence ID" value="ABZ69142.1"/>
    <property type="molecule type" value="Genomic_DNA"/>
</dbReference>
<dbReference type="SMR" id="B0T138"/>
<dbReference type="STRING" id="366602.Caul_0004"/>
<dbReference type="KEGG" id="cak:Caul_0004"/>
<dbReference type="eggNOG" id="COG0443">
    <property type="taxonomic scope" value="Bacteria"/>
</dbReference>
<dbReference type="HOGENOM" id="CLU_005965_2_1_5"/>
<dbReference type="OrthoDB" id="9766019at2"/>
<dbReference type="GO" id="GO:0005524">
    <property type="term" value="F:ATP binding"/>
    <property type="evidence" value="ECO:0007669"/>
    <property type="project" value="UniProtKB-UniRule"/>
</dbReference>
<dbReference type="GO" id="GO:0140662">
    <property type="term" value="F:ATP-dependent protein folding chaperone"/>
    <property type="evidence" value="ECO:0007669"/>
    <property type="project" value="InterPro"/>
</dbReference>
<dbReference type="GO" id="GO:0051082">
    <property type="term" value="F:unfolded protein binding"/>
    <property type="evidence" value="ECO:0007669"/>
    <property type="project" value="InterPro"/>
</dbReference>
<dbReference type="CDD" id="cd11733">
    <property type="entry name" value="ASKHA_NBD_HSP70_HSPA9"/>
    <property type="match status" value="1"/>
</dbReference>
<dbReference type="FunFam" id="2.60.34.10:FF:000014">
    <property type="entry name" value="Chaperone protein DnaK HSP70"/>
    <property type="match status" value="1"/>
</dbReference>
<dbReference type="FunFam" id="1.20.1270.10:FF:000001">
    <property type="entry name" value="Molecular chaperone DnaK"/>
    <property type="match status" value="1"/>
</dbReference>
<dbReference type="FunFam" id="3.30.420.40:FF:000004">
    <property type="entry name" value="Molecular chaperone DnaK"/>
    <property type="match status" value="1"/>
</dbReference>
<dbReference type="FunFam" id="3.90.640.10:FF:000003">
    <property type="entry name" value="Molecular chaperone DnaK"/>
    <property type="match status" value="1"/>
</dbReference>
<dbReference type="Gene3D" id="1.20.1270.10">
    <property type="match status" value="1"/>
</dbReference>
<dbReference type="Gene3D" id="3.30.420.40">
    <property type="match status" value="2"/>
</dbReference>
<dbReference type="Gene3D" id="3.90.640.10">
    <property type="entry name" value="Actin, Chain A, domain 4"/>
    <property type="match status" value="1"/>
</dbReference>
<dbReference type="Gene3D" id="2.60.34.10">
    <property type="entry name" value="Substrate Binding Domain Of DNAk, Chain A, domain 1"/>
    <property type="match status" value="1"/>
</dbReference>
<dbReference type="HAMAP" id="MF_00332">
    <property type="entry name" value="DnaK"/>
    <property type="match status" value="1"/>
</dbReference>
<dbReference type="InterPro" id="IPR043129">
    <property type="entry name" value="ATPase_NBD"/>
</dbReference>
<dbReference type="InterPro" id="IPR012725">
    <property type="entry name" value="Chaperone_DnaK"/>
</dbReference>
<dbReference type="InterPro" id="IPR018181">
    <property type="entry name" value="Heat_shock_70_CS"/>
</dbReference>
<dbReference type="InterPro" id="IPR029048">
    <property type="entry name" value="HSP70_C_sf"/>
</dbReference>
<dbReference type="InterPro" id="IPR029047">
    <property type="entry name" value="HSP70_peptide-bd_sf"/>
</dbReference>
<dbReference type="InterPro" id="IPR013126">
    <property type="entry name" value="Hsp_70_fam"/>
</dbReference>
<dbReference type="NCBIfam" id="NF001413">
    <property type="entry name" value="PRK00290.1"/>
    <property type="match status" value="1"/>
</dbReference>
<dbReference type="NCBIfam" id="NF003520">
    <property type="entry name" value="PRK05183.1"/>
    <property type="match status" value="1"/>
</dbReference>
<dbReference type="NCBIfam" id="TIGR02350">
    <property type="entry name" value="prok_dnaK"/>
    <property type="match status" value="1"/>
</dbReference>
<dbReference type="PANTHER" id="PTHR19375">
    <property type="entry name" value="HEAT SHOCK PROTEIN 70KDA"/>
    <property type="match status" value="1"/>
</dbReference>
<dbReference type="Pfam" id="PF00012">
    <property type="entry name" value="HSP70"/>
    <property type="match status" value="1"/>
</dbReference>
<dbReference type="PRINTS" id="PR00301">
    <property type="entry name" value="HEATSHOCK70"/>
</dbReference>
<dbReference type="SUPFAM" id="SSF53067">
    <property type="entry name" value="Actin-like ATPase domain"/>
    <property type="match status" value="2"/>
</dbReference>
<dbReference type="SUPFAM" id="SSF100934">
    <property type="entry name" value="Heat shock protein 70kD (HSP70), C-terminal subdomain"/>
    <property type="match status" value="1"/>
</dbReference>
<dbReference type="SUPFAM" id="SSF100920">
    <property type="entry name" value="Heat shock protein 70kD (HSP70), peptide-binding domain"/>
    <property type="match status" value="1"/>
</dbReference>
<dbReference type="PROSITE" id="PS00297">
    <property type="entry name" value="HSP70_1"/>
    <property type="match status" value="1"/>
</dbReference>
<dbReference type="PROSITE" id="PS00329">
    <property type="entry name" value="HSP70_2"/>
    <property type="match status" value="1"/>
</dbReference>
<dbReference type="PROSITE" id="PS01036">
    <property type="entry name" value="HSP70_3"/>
    <property type="match status" value="1"/>
</dbReference>
<reference key="1">
    <citation type="submission" date="2008-01" db="EMBL/GenBank/DDBJ databases">
        <title>Complete sequence of chromosome of Caulobacter sp. K31.</title>
        <authorList>
            <consortium name="US DOE Joint Genome Institute"/>
            <person name="Copeland A."/>
            <person name="Lucas S."/>
            <person name="Lapidus A."/>
            <person name="Barry K."/>
            <person name="Glavina del Rio T."/>
            <person name="Dalin E."/>
            <person name="Tice H."/>
            <person name="Pitluck S."/>
            <person name="Bruce D."/>
            <person name="Goodwin L."/>
            <person name="Thompson L.S."/>
            <person name="Brettin T."/>
            <person name="Detter J.C."/>
            <person name="Han C."/>
            <person name="Schmutz J."/>
            <person name="Larimer F."/>
            <person name="Land M."/>
            <person name="Hauser L."/>
            <person name="Kyrpides N."/>
            <person name="Kim E."/>
            <person name="Stephens C."/>
            <person name="Richardson P."/>
        </authorList>
    </citation>
    <scope>NUCLEOTIDE SEQUENCE [LARGE SCALE GENOMIC DNA]</scope>
    <source>
        <strain>K31</strain>
    </source>
</reference>
<name>DNAK_CAUSK</name>
<organism>
    <name type="scientific">Caulobacter sp. (strain K31)</name>
    <dbReference type="NCBI Taxonomy" id="366602"/>
    <lineage>
        <taxon>Bacteria</taxon>
        <taxon>Pseudomonadati</taxon>
        <taxon>Pseudomonadota</taxon>
        <taxon>Alphaproteobacteria</taxon>
        <taxon>Caulobacterales</taxon>
        <taxon>Caulobacteraceae</taxon>
        <taxon>Caulobacter</taxon>
    </lineage>
</organism>
<accession>B0T138</accession>
<gene>
    <name evidence="1" type="primary">dnaK</name>
    <name type="ordered locus">Caul_0004</name>
</gene>
<evidence type="ECO:0000255" key="1">
    <source>
        <dbReference type="HAMAP-Rule" id="MF_00332"/>
    </source>
</evidence>
<sequence length="631" mass="67652">MSKIIGIDLGTTNSCVAIMDGKTPKVIENAEGARTTPSVVAFLEDGERLVGQPAKRQAVTNPTNTLFAIKRLIGRNFADPVVAKDKAMVPYEIVKGPTGDAWVKAHGKDYSPQEVSAFILQKMKEAAESHLGEPVTKAVITVPAYFNDAQRQATKDAGKIAGLEVLRIINEPTAAALAYGLEMNEGKKIAVYDLGGGTFDVSVLEIGDGVFEVKSTNGDTFLGGEDFDLRIVDYLADEFKKEQGVDLRKDKLALQRLREEAEKAKKELSSTAQYEVNLPFISMNASGPLHLNIKLSRSKLEALVEDLITRTIGPCEQALKDAGLKKSDIDEVILVGGMSRMPKVQQAVQDFFGREPHKGVNPDEVVALGAAVQAGVLQGDVKDVLLLDVTPLTLGIETLGGVFTPLIERNTTIPTKRSQTFSTADDNQSAVTIRAFQGERPMAVDNKFLGQFDLQGIPPAPRGVPQIEVTFDIDANGIVNVHAKDKATNKEHSIRIQANGGLSDADIERMVKEAEANKASDEKKKALVEAKNQGEAIVHSTEKAFAEHGDKIGGAEKTAIETGLTDLKAALEGEDVEAIQAKTQALIQASMKLGEAMYGAQQGADGGEEAAHDDGVVDAEFEEVDDSKPSA</sequence>
<proteinExistence type="inferred from homology"/>
<comment type="function">
    <text evidence="1">Acts as a chaperone.</text>
</comment>
<comment type="induction">
    <text evidence="1">By stress conditions e.g. heat shock.</text>
</comment>
<comment type="similarity">
    <text evidence="1">Belongs to the heat shock protein 70 family.</text>
</comment>